<reference key="1">
    <citation type="journal article" date="2007" name="PLoS Genet.">
        <title>Patterns and implications of gene gain and loss in the evolution of Prochlorococcus.</title>
        <authorList>
            <person name="Kettler G.C."/>
            <person name="Martiny A.C."/>
            <person name="Huang K."/>
            <person name="Zucker J."/>
            <person name="Coleman M.L."/>
            <person name="Rodrigue S."/>
            <person name="Chen F."/>
            <person name="Lapidus A."/>
            <person name="Ferriera S."/>
            <person name="Johnson J."/>
            <person name="Steglich C."/>
            <person name="Church G.M."/>
            <person name="Richardson P."/>
            <person name="Chisholm S.W."/>
        </authorList>
    </citation>
    <scope>NUCLEOTIDE SEQUENCE [LARGE SCALE GENOMIC DNA]</scope>
    <source>
        <strain>NATL2A</strain>
    </source>
</reference>
<organism>
    <name type="scientific">Prochlorococcus marinus (strain NATL2A)</name>
    <dbReference type="NCBI Taxonomy" id="59920"/>
    <lineage>
        <taxon>Bacteria</taxon>
        <taxon>Bacillati</taxon>
        <taxon>Cyanobacteriota</taxon>
        <taxon>Cyanophyceae</taxon>
        <taxon>Synechococcales</taxon>
        <taxon>Prochlorococcaceae</taxon>
        <taxon>Prochlorococcus</taxon>
    </lineage>
</organism>
<proteinExistence type="inferred from homology"/>
<protein>
    <recommendedName>
        <fullName evidence="1">Acetylglutamate kinase</fullName>
        <ecNumber evidence="1">2.7.2.8</ecNumber>
    </recommendedName>
    <alternativeName>
        <fullName evidence="1">N-acetyl-L-glutamate 5-phosphotransferase</fullName>
    </alternativeName>
    <alternativeName>
        <fullName evidence="1">NAG kinase</fullName>
        <shortName evidence="1">NAGK</shortName>
    </alternativeName>
</protein>
<keyword id="KW-0028">Amino-acid biosynthesis</keyword>
<keyword id="KW-0055">Arginine biosynthesis</keyword>
<keyword id="KW-0067">ATP-binding</keyword>
<keyword id="KW-0963">Cytoplasm</keyword>
<keyword id="KW-0418">Kinase</keyword>
<keyword id="KW-0547">Nucleotide-binding</keyword>
<keyword id="KW-1185">Reference proteome</keyword>
<keyword id="KW-0808">Transferase</keyword>
<accession>Q46GS3</accession>
<sequence length="304" mass="32366">MNKEIQQAKHSKNINKPFTDKDSIRVSVLSEALPYIQRFANKRIVIKYGGSAMADKTLQNAVFRDLALLSSVGVQIVVVHGGGPEINQWLEKLGIKPVFLDGLRITDTETMDVVEMVLTGRVNKQIVSGINNHGRLAVGLCGIDGGLIEARTLGGGSHGLVGEVAKVNTKILSPLLEEGYVPVISSVANSSDGKSHNINADTVAGELAAALGAEKLILLTDTPGILRNENDPSSLIEKIRLSEARELIDKGIVKAGMKPKVECCIRSLAQGVNAAHIIDGRTPHSLLLEVFTDAGIGTMVMGRG</sequence>
<feature type="chain" id="PRO_0000264733" description="Acetylglutamate kinase">
    <location>
        <begin position="1"/>
        <end position="304"/>
    </location>
</feature>
<feature type="binding site" evidence="1">
    <location>
        <begin position="82"/>
        <end position="83"/>
    </location>
    <ligand>
        <name>substrate</name>
    </ligand>
</feature>
<feature type="binding site" evidence="1">
    <location>
        <position position="104"/>
    </location>
    <ligand>
        <name>substrate</name>
    </ligand>
</feature>
<feature type="binding site" evidence="1">
    <location>
        <position position="197"/>
    </location>
    <ligand>
        <name>substrate</name>
    </ligand>
</feature>
<feature type="site" description="Transition state stabilizer" evidence="1">
    <location>
        <position position="47"/>
    </location>
</feature>
<feature type="site" description="Transition state stabilizer" evidence="1">
    <location>
        <position position="260"/>
    </location>
</feature>
<comment type="function">
    <text evidence="1">Catalyzes the ATP-dependent phosphorylation of N-acetyl-L-glutamate.</text>
</comment>
<comment type="catalytic activity">
    <reaction evidence="1">
        <text>N-acetyl-L-glutamate + ATP = N-acetyl-L-glutamyl 5-phosphate + ADP</text>
        <dbReference type="Rhea" id="RHEA:14629"/>
        <dbReference type="ChEBI" id="CHEBI:30616"/>
        <dbReference type="ChEBI" id="CHEBI:44337"/>
        <dbReference type="ChEBI" id="CHEBI:57936"/>
        <dbReference type="ChEBI" id="CHEBI:456216"/>
        <dbReference type="EC" id="2.7.2.8"/>
    </reaction>
</comment>
<comment type="pathway">
    <text evidence="1">Amino-acid biosynthesis; L-arginine biosynthesis; N(2)-acetyl-L-ornithine from L-glutamate: step 2/4.</text>
</comment>
<comment type="subcellular location">
    <subcellularLocation>
        <location evidence="1">Cytoplasm</location>
    </subcellularLocation>
</comment>
<comment type="similarity">
    <text evidence="1">Belongs to the acetylglutamate kinase family. ArgB subfamily.</text>
</comment>
<dbReference type="EC" id="2.7.2.8" evidence="1"/>
<dbReference type="EMBL" id="CP000095">
    <property type="protein sequence ID" value="AAZ59320.1"/>
    <property type="molecule type" value="Genomic_DNA"/>
</dbReference>
<dbReference type="RefSeq" id="WP_011294464.1">
    <property type="nucleotide sequence ID" value="NC_007335.2"/>
</dbReference>
<dbReference type="SMR" id="Q46GS3"/>
<dbReference type="STRING" id="59920.PMN2A_1832"/>
<dbReference type="KEGG" id="pmn:PMN2A_1832"/>
<dbReference type="HOGENOM" id="CLU_053680_0_0_3"/>
<dbReference type="OrthoDB" id="9803155at2"/>
<dbReference type="PhylomeDB" id="Q46GS3"/>
<dbReference type="UniPathway" id="UPA00068">
    <property type="reaction ID" value="UER00107"/>
</dbReference>
<dbReference type="Proteomes" id="UP000002535">
    <property type="component" value="Chromosome"/>
</dbReference>
<dbReference type="GO" id="GO:0005737">
    <property type="term" value="C:cytoplasm"/>
    <property type="evidence" value="ECO:0007669"/>
    <property type="project" value="UniProtKB-SubCell"/>
</dbReference>
<dbReference type="GO" id="GO:0003991">
    <property type="term" value="F:acetylglutamate kinase activity"/>
    <property type="evidence" value="ECO:0007669"/>
    <property type="project" value="UniProtKB-UniRule"/>
</dbReference>
<dbReference type="GO" id="GO:0005524">
    <property type="term" value="F:ATP binding"/>
    <property type="evidence" value="ECO:0007669"/>
    <property type="project" value="UniProtKB-UniRule"/>
</dbReference>
<dbReference type="GO" id="GO:0042450">
    <property type="term" value="P:arginine biosynthetic process via ornithine"/>
    <property type="evidence" value="ECO:0007669"/>
    <property type="project" value="UniProtKB-UniRule"/>
</dbReference>
<dbReference type="GO" id="GO:0006526">
    <property type="term" value="P:L-arginine biosynthetic process"/>
    <property type="evidence" value="ECO:0007669"/>
    <property type="project" value="UniProtKB-UniPathway"/>
</dbReference>
<dbReference type="CDD" id="cd04250">
    <property type="entry name" value="AAK_NAGK-C"/>
    <property type="match status" value="1"/>
</dbReference>
<dbReference type="FunFam" id="3.40.1160.10:FF:000004">
    <property type="entry name" value="Acetylglutamate kinase"/>
    <property type="match status" value="1"/>
</dbReference>
<dbReference type="Gene3D" id="3.40.1160.10">
    <property type="entry name" value="Acetylglutamate kinase-like"/>
    <property type="match status" value="1"/>
</dbReference>
<dbReference type="HAMAP" id="MF_00082">
    <property type="entry name" value="ArgB"/>
    <property type="match status" value="1"/>
</dbReference>
<dbReference type="InterPro" id="IPR036393">
    <property type="entry name" value="AceGlu_kinase-like_sf"/>
</dbReference>
<dbReference type="InterPro" id="IPR004662">
    <property type="entry name" value="AcgluKinase_fam"/>
</dbReference>
<dbReference type="InterPro" id="IPR037528">
    <property type="entry name" value="ArgB"/>
</dbReference>
<dbReference type="InterPro" id="IPR001048">
    <property type="entry name" value="Asp/Glu/Uridylate_kinase"/>
</dbReference>
<dbReference type="InterPro" id="IPR001057">
    <property type="entry name" value="Glu/AcGlu_kinase"/>
</dbReference>
<dbReference type="InterPro" id="IPR041727">
    <property type="entry name" value="NAGK-C"/>
</dbReference>
<dbReference type="NCBIfam" id="TIGR00761">
    <property type="entry name" value="argB"/>
    <property type="match status" value="1"/>
</dbReference>
<dbReference type="PANTHER" id="PTHR23342">
    <property type="entry name" value="N-ACETYLGLUTAMATE SYNTHASE"/>
    <property type="match status" value="1"/>
</dbReference>
<dbReference type="PANTHER" id="PTHR23342:SF0">
    <property type="entry name" value="N-ACETYLGLUTAMATE SYNTHASE, MITOCHONDRIAL"/>
    <property type="match status" value="1"/>
</dbReference>
<dbReference type="Pfam" id="PF00696">
    <property type="entry name" value="AA_kinase"/>
    <property type="match status" value="1"/>
</dbReference>
<dbReference type="PIRSF" id="PIRSF000728">
    <property type="entry name" value="NAGK"/>
    <property type="match status" value="1"/>
</dbReference>
<dbReference type="PRINTS" id="PR00474">
    <property type="entry name" value="GLU5KINASE"/>
</dbReference>
<dbReference type="SUPFAM" id="SSF53633">
    <property type="entry name" value="Carbamate kinase-like"/>
    <property type="match status" value="1"/>
</dbReference>
<evidence type="ECO:0000255" key="1">
    <source>
        <dbReference type="HAMAP-Rule" id="MF_00082"/>
    </source>
</evidence>
<name>ARGB_PROMT</name>
<gene>
    <name evidence="1" type="primary">argB</name>
    <name type="ordered locus">PMN2A_1832</name>
</gene>